<evidence type="ECO:0000255" key="1">
    <source>
        <dbReference type="HAMAP-Rule" id="MF_00294"/>
    </source>
</evidence>
<evidence type="ECO:0000305" key="2"/>
<feature type="chain" id="PRO_0000356461" description="Large ribosomal subunit protein bL33">
    <location>
        <begin position="1"/>
        <end position="51"/>
    </location>
</feature>
<comment type="similarity">
    <text evidence="1">Belongs to the bacterial ribosomal protein bL33 family.</text>
</comment>
<protein>
    <recommendedName>
        <fullName evidence="1">Large ribosomal subunit protein bL33</fullName>
    </recommendedName>
    <alternativeName>
        <fullName evidence="2">50S ribosomal protein L33</fullName>
    </alternativeName>
</protein>
<sequence length="51" mass="6153">MREKIRLVSSAKTGHFYTTTKNKREMPNKMEIKKFDPVVRKHVMYKEAKIK</sequence>
<accession>B0U0G0</accession>
<reference key="1">
    <citation type="submission" date="2007-12" db="EMBL/GenBank/DDBJ databases">
        <title>Complete sequence of chromosome of Francisella philomiragia subsp. philomiragia ATCC 25017.</title>
        <authorList>
            <consortium name="US DOE Joint Genome Institute"/>
            <person name="Copeland A."/>
            <person name="Lucas S."/>
            <person name="Lapidus A."/>
            <person name="Barry K."/>
            <person name="Detter J.C."/>
            <person name="Glavina del Rio T."/>
            <person name="Hammon N."/>
            <person name="Israni S."/>
            <person name="Dalin E."/>
            <person name="Tice H."/>
            <person name="Pitluck S."/>
            <person name="Chain P."/>
            <person name="Malfatti S."/>
            <person name="Shin M."/>
            <person name="Vergez L."/>
            <person name="Schmutz J."/>
            <person name="Larimer F."/>
            <person name="Land M."/>
            <person name="Hauser L."/>
            <person name="Richardson P."/>
        </authorList>
    </citation>
    <scope>NUCLEOTIDE SEQUENCE [LARGE SCALE GENOMIC DNA]</scope>
    <source>
        <strain>ATCC 25017 / CCUG 19701 / FSC 153 / O#319-036</strain>
    </source>
</reference>
<gene>
    <name evidence="1" type="primary">rpmG</name>
    <name type="ordered locus">Fphi_0493</name>
</gene>
<name>RL33_FRAP2</name>
<dbReference type="EMBL" id="CP000937">
    <property type="protein sequence ID" value="ABZ86711.1"/>
    <property type="molecule type" value="Genomic_DNA"/>
</dbReference>
<dbReference type="SMR" id="B0U0G0"/>
<dbReference type="KEGG" id="fph:Fphi_0493"/>
<dbReference type="eggNOG" id="COG0267">
    <property type="taxonomic scope" value="Bacteria"/>
</dbReference>
<dbReference type="HOGENOM" id="CLU_190949_1_1_6"/>
<dbReference type="GO" id="GO:0022625">
    <property type="term" value="C:cytosolic large ribosomal subunit"/>
    <property type="evidence" value="ECO:0007669"/>
    <property type="project" value="TreeGrafter"/>
</dbReference>
<dbReference type="GO" id="GO:0003735">
    <property type="term" value="F:structural constituent of ribosome"/>
    <property type="evidence" value="ECO:0007669"/>
    <property type="project" value="InterPro"/>
</dbReference>
<dbReference type="GO" id="GO:0006412">
    <property type="term" value="P:translation"/>
    <property type="evidence" value="ECO:0007669"/>
    <property type="project" value="UniProtKB-UniRule"/>
</dbReference>
<dbReference type="FunFam" id="2.20.28.120:FF:000001">
    <property type="entry name" value="50S ribosomal protein L33"/>
    <property type="match status" value="1"/>
</dbReference>
<dbReference type="Gene3D" id="2.20.28.120">
    <property type="entry name" value="Ribosomal protein L33"/>
    <property type="match status" value="1"/>
</dbReference>
<dbReference type="HAMAP" id="MF_00294">
    <property type="entry name" value="Ribosomal_bL33"/>
    <property type="match status" value="1"/>
</dbReference>
<dbReference type="InterPro" id="IPR001705">
    <property type="entry name" value="Ribosomal_bL33"/>
</dbReference>
<dbReference type="InterPro" id="IPR018264">
    <property type="entry name" value="Ribosomal_bL33_CS"/>
</dbReference>
<dbReference type="InterPro" id="IPR038584">
    <property type="entry name" value="Ribosomal_bL33_sf"/>
</dbReference>
<dbReference type="InterPro" id="IPR011332">
    <property type="entry name" value="Ribosomal_zn-bd"/>
</dbReference>
<dbReference type="NCBIfam" id="NF001860">
    <property type="entry name" value="PRK00595.1"/>
    <property type="match status" value="1"/>
</dbReference>
<dbReference type="NCBIfam" id="TIGR01023">
    <property type="entry name" value="rpmG_bact"/>
    <property type="match status" value="1"/>
</dbReference>
<dbReference type="PANTHER" id="PTHR15238">
    <property type="entry name" value="54S RIBOSOMAL PROTEIN L39, MITOCHONDRIAL"/>
    <property type="match status" value="1"/>
</dbReference>
<dbReference type="PANTHER" id="PTHR15238:SF1">
    <property type="entry name" value="LARGE RIBOSOMAL SUBUNIT PROTEIN BL33M"/>
    <property type="match status" value="1"/>
</dbReference>
<dbReference type="Pfam" id="PF00471">
    <property type="entry name" value="Ribosomal_L33"/>
    <property type="match status" value="1"/>
</dbReference>
<dbReference type="SUPFAM" id="SSF57829">
    <property type="entry name" value="Zn-binding ribosomal proteins"/>
    <property type="match status" value="1"/>
</dbReference>
<dbReference type="PROSITE" id="PS00582">
    <property type="entry name" value="RIBOSOMAL_L33"/>
    <property type="match status" value="1"/>
</dbReference>
<proteinExistence type="inferred from homology"/>
<organism>
    <name type="scientific">Francisella philomiragia subsp. philomiragia (strain ATCC 25017 / CCUG 19701 / FSC 153 / O#319-036)</name>
    <dbReference type="NCBI Taxonomy" id="484022"/>
    <lineage>
        <taxon>Bacteria</taxon>
        <taxon>Pseudomonadati</taxon>
        <taxon>Pseudomonadota</taxon>
        <taxon>Gammaproteobacteria</taxon>
        <taxon>Thiotrichales</taxon>
        <taxon>Francisellaceae</taxon>
        <taxon>Francisella</taxon>
    </lineage>
</organism>
<keyword id="KW-0687">Ribonucleoprotein</keyword>
<keyword id="KW-0689">Ribosomal protein</keyword>